<organism>
    <name type="scientific">Bartonella henselae (strain ATCC 49882 / DSM 28221 / CCUG 30454 / Houston 1)</name>
    <name type="common">Rochalimaea henselae</name>
    <dbReference type="NCBI Taxonomy" id="283166"/>
    <lineage>
        <taxon>Bacteria</taxon>
        <taxon>Pseudomonadati</taxon>
        <taxon>Pseudomonadota</taxon>
        <taxon>Alphaproteobacteria</taxon>
        <taxon>Hyphomicrobiales</taxon>
        <taxon>Bartonellaceae</taxon>
        <taxon>Bartonella</taxon>
    </lineage>
</organism>
<protein>
    <recommendedName>
        <fullName evidence="1">Pyridoxine/pyridoxamine 5'-phosphate oxidase</fullName>
        <ecNumber evidence="1">1.4.3.5</ecNumber>
    </recommendedName>
    <alternativeName>
        <fullName evidence="1">PNP/PMP oxidase</fullName>
        <shortName evidence="1">PNPOx</shortName>
    </alternativeName>
    <alternativeName>
        <fullName evidence="1">Pyridoxal 5'-phosphate synthase</fullName>
    </alternativeName>
</protein>
<sequence length="207" mass="24271">MGNTVQTDNDFMQMQKPFALFAKWLEEATVSEINDPNAMALATVDKTGFPNVRMVLLKDFSPQGFVFYTNYESPKGQEILKSMKASLVFHWKSLRRQVRIRGIVEKVTPQEADAYFQSRPRDSRIGAWASKQSQPLESRFVLEKAIARYTTRYAVGNIPRPPYWSGFRVKPLSIEFWCDRPFRLHDRLLFTRDSVEHVDWKRQKLYP</sequence>
<gene>
    <name evidence="1" type="primary">pdxH</name>
    <name type="ordered locus">BH04290</name>
</gene>
<dbReference type="EC" id="1.4.3.5" evidence="1"/>
<dbReference type="EMBL" id="BX897699">
    <property type="protein sequence ID" value="CAF27238.1"/>
    <property type="molecule type" value="Genomic_DNA"/>
</dbReference>
<dbReference type="RefSeq" id="WP_011180362.1">
    <property type="nucleotide sequence ID" value="NC_005956.1"/>
</dbReference>
<dbReference type="SMR" id="Q6G4D7"/>
<dbReference type="PaxDb" id="283166-BH04290"/>
<dbReference type="EnsemblBacteria" id="CAF27238">
    <property type="protein sequence ID" value="CAF27238"/>
    <property type="gene ID" value="BH04290"/>
</dbReference>
<dbReference type="KEGG" id="bhe:BH04290"/>
<dbReference type="eggNOG" id="COG0259">
    <property type="taxonomic scope" value="Bacteria"/>
</dbReference>
<dbReference type="OrthoDB" id="9780392at2"/>
<dbReference type="UniPathway" id="UPA01068">
    <property type="reaction ID" value="UER00304"/>
</dbReference>
<dbReference type="UniPathway" id="UPA01068">
    <property type="reaction ID" value="UER00305"/>
</dbReference>
<dbReference type="Proteomes" id="UP000000421">
    <property type="component" value="Chromosome"/>
</dbReference>
<dbReference type="GO" id="GO:0010181">
    <property type="term" value="F:FMN binding"/>
    <property type="evidence" value="ECO:0007669"/>
    <property type="project" value="UniProtKB-UniRule"/>
</dbReference>
<dbReference type="GO" id="GO:0004733">
    <property type="term" value="F:pyridoxamine phosphate oxidase activity"/>
    <property type="evidence" value="ECO:0007669"/>
    <property type="project" value="UniProtKB-UniRule"/>
</dbReference>
<dbReference type="GO" id="GO:0008615">
    <property type="term" value="P:pyridoxine biosynthetic process"/>
    <property type="evidence" value="ECO:0007669"/>
    <property type="project" value="UniProtKB-KW"/>
</dbReference>
<dbReference type="Gene3D" id="2.30.110.10">
    <property type="entry name" value="Electron Transport, Fmn-binding Protein, Chain A"/>
    <property type="match status" value="1"/>
</dbReference>
<dbReference type="HAMAP" id="MF_01629">
    <property type="entry name" value="PdxH"/>
    <property type="match status" value="1"/>
</dbReference>
<dbReference type="InterPro" id="IPR000659">
    <property type="entry name" value="Pyridox_Oxase"/>
</dbReference>
<dbReference type="InterPro" id="IPR019740">
    <property type="entry name" value="Pyridox_Oxase_CS"/>
</dbReference>
<dbReference type="InterPro" id="IPR011576">
    <property type="entry name" value="Pyridox_Oxase_N"/>
</dbReference>
<dbReference type="InterPro" id="IPR019576">
    <property type="entry name" value="Pyridoxamine_oxidase_dimer_C"/>
</dbReference>
<dbReference type="InterPro" id="IPR012349">
    <property type="entry name" value="Split_barrel_FMN-bd"/>
</dbReference>
<dbReference type="NCBIfam" id="TIGR00558">
    <property type="entry name" value="pdxH"/>
    <property type="match status" value="1"/>
</dbReference>
<dbReference type="NCBIfam" id="NF004231">
    <property type="entry name" value="PRK05679.1"/>
    <property type="match status" value="1"/>
</dbReference>
<dbReference type="PANTHER" id="PTHR10851:SF0">
    <property type="entry name" value="PYRIDOXINE-5'-PHOSPHATE OXIDASE"/>
    <property type="match status" value="1"/>
</dbReference>
<dbReference type="PANTHER" id="PTHR10851">
    <property type="entry name" value="PYRIDOXINE-5-PHOSPHATE OXIDASE"/>
    <property type="match status" value="1"/>
</dbReference>
<dbReference type="Pfam" id="PF10590">
    <property type="entry name" value="PNP_phzG_C"/>
    <property type="match status" value="1"/>
</dbReference>
<dbReference type="Pfam" id="PF01243">
    <property type="entry name" value="PNPOx_N"/>
    <property type="match status" value="1"/>
</dbReference>
<dbReference type="PIRSF" id="PIRSF000190">
    <property type="entry name" value="Pyd_amn-ph_oxd"/>
    <property type="match status" value="1"/>
</dbReference>
<dbReference type="SUPFAM" id="SSF50475">
    <property type="entry name" value="FMN-binding split barrel"/>
    <property type="match status" value="1"/>
</dbReference>
<dbReference type="PROSITE" id="PS01064">
    <property type="entry name" value="PYRIDOX_OXIDASE"/>
    <property type="match status" value="1"/>
</dbReference>
<proteinExistence type="inferred from homology"/>
<evidence type="ECO:0000255" key="1">
    <source>
        <dbReference type="HAMAP-Rule" id="MF_01629"/>
    </source>
</evidence>
<name>PDXH_BARHE</name>
<reference key="1">
    <citation type="journal article" date="2004" name="Proc. Natl. Acad. Sci. U.S.A.">
        <title>The louse-borne human pathogen Bartonella quintana is a genomic derivative of the zoonotic agent Bartonella henselae.</title>
        <authorList>
            <person name="Alsmark U.C.M."/>
            <person name="Frank A.C."/>
            <person name="Karlberg E.O."/>
            <person name="Legault B.-A."/>
            <person name="Ardell D.H."/>
            <person name="Canbaeck B."/>
            <person name="Eriksson A.-S."/>
            <person name="Naeslund A.K."/>
            <person name="Handley S.A."/>
            <person name="Huvet M."/>
            <person name="La Scola B."/>
            <person name="Holmberg M."/>
            <person name="Andersson S.G.E."/>
        </authorList>
    </citation>
    <scope>NUCLEOTIDE SEQUENCE [LARGE SCALE GENOMIC DNA]</scope>
    <source>
        <strain>ATCC 49882 / DSM 28221 / CCUG 30454 / Houston 1</strain>
    </source>
</reference>
<keyword id="KW-0285">Flavoprotein</keyword>
<keyword id="KW-0288">FMN</keyword>
<keyword id="KW-0560">Oxidoreductase</keyword>
<keyword id="KW-0664">Pyridoxine biosynthesis</keyword>
<comment type="function">
    <text evidence="1">Catalyzes the oxidation of either pyridoxine 5'-phosphate (PNP) or pyridoxamine 5'-phosphate (PMP) into pyridoxal 5'-phosphate (PLP).</text>
</comment>
<comment type="catalytic activity">
    <reaction evidence="1">
        <text>pyridoxamine 5'-phosphate + O2 + H2O = pyridoxal 5'-phosphate + H2O2 + NH4(+)</text>
        <dbReference type="Rhea" id="RHEA:15817"/>
        <dbReference type="ChEBI" id="CHEBI:15377"/>
        <dbReference type="ChEBI" id="CHEBI:15379"/>
        <dbReference type="ChEBI" id="CHEBI:16240"/>
        <dbReference type="ChEBI" id="CHEBI:28938"/>
        <dbReference type="ChEBI" id="CHEBI:58451"/>
        <dbReference type="ChEBI" id="CHEBI:597326"/>
        <dbReference type="EC" id="1.4.3.5"/>
    </reaction>
</comment>
<comment type="catalytic activity">
    <reaction evidence="1">
        <text>pyridoxine 5'-phosphate + O2 = pyridoxal 5'-phosphate + H2O2</text>
        <dbReference type="Rhea" id="RHEA:15149"/>
        <dbReference type="ChEBI" id="CHEBI:15379"/>
        <dbReference type="ChEBI" id="CHEBI:16240"/>
        <dbReference type="ChEBI" id="CHEBI:58589"/>
        <dbReference type="ChEBI" id="CHEBI:597326"/>
        <dbReference type="EC" id="1.4.3.5"/>
    </reaction>
</comment>
<comment type="cofactor">
    <cofactor evidence="1">
        <name>FMN</name>
        <dbReference type="ChEBI" id="CHEBI:58210"/>
    </cofactor>
    <text evidence="1">Binds 1 FMN per subunit.</text>
</comment>
<comment type="pathway">
    <text evidence="1">Cofactor metabolism; pyridoxal 5'-phosphate salvage; pyridoxal 5'-phosphate from pyridoxamine 5'-phosphate: step 1/1.</text>
</comment>
<comment type="pathway">
    <text evidence="1">Cofactor metabolism; pyridoxal 5'-phosphate salvage; pyridoxal 5'-phosphate from pyridoxine 5'-phosphate: step 1/1.</text>
</comment>
<comment type="subunit">
    <text evidence="1">Homodimer.</text>
</comment>
<comment type="similarity">
    <text evidence="1">Belongs to the pyridoxamine 5'-phosphate oxidase family.</text>
</comment>
<accession>Q6G4D7</accession>
<feature type="chain" id="PRO_0000167684" description="Pyridoxine/pyridoxamine 5'-phosphate oxidase">
    <location>
        <begin position="1"/>
        <end position="207"/>
    </location>
</feature>
<feature type="binding site" evidence="1">
    <location>
        <begin position="53"/>
        <end position="58"/>
    </location>
    <ligand>
        <name>FMN</name>
        <dbReference type="ChEBI" id="CHEBI:58210"/>
    </ligand>
</feature>
<feature type="binding site" evidence="1">
    <location>
        <position position="58"/>
    </location>
    <ligand>
        <name>substrate</name>
    </ligand>
</feature>
<feature type="binding site" evidence="1">
    <location>
        <begin position="68"/>
        <end position="69"/>
    </location>
    <ligand>
        <name>FMN</name>
        <dbReference type="ChEBI" id="CHEBI:58210"/>
    </ligand>
</feature>
<feature type="binding site" evidence="1">
    <location>
        <position position="75"/>
    </location>
    <ligand>
        <name>FMN</name>
        <dbReference type="ChEBI" id="CHEBI:58210"/>
    </ligand>
</feature>
<feature type="binding site" evidence="1">
    <location>
        <position position="97"/>
    </location>
    <ligand>
        <name>FMN</name>
        <dbReference type="ChEBI" id="CHEBI:58210"/>
    </ligand>
</feature>
<feature type="binding site" evidence="1">
    <location>
        <position position="115"/>
    </location>
    <ligand>
        <name>substrate</name>
    </ligand>
</feature>
<feature type="binding site" evidence="1">
    <location>
        <position position="119"/>
    </location>
    <ligand>
        <name>substrate</name>
    </ligand>
</feature>
<feature type="binding site" evidence="1">
    <location>
        <position position="123"/>
    </location>
    <ligand>
        <name>substrate</name>
    </ligand>
</feature>
<feature type="binding site" evidence="1">
    <location>
        <begin position="132"/>
        <end position="133"/>
    </location>
    <ligand>
        <name>FMN</name>
        <dbReference type="ChEBI" id="CHEBI:58210"/>
    </ligand>
</feature>
<feature type="binding site" evidence="1">
    <location>
        <position position="177"/>
    </location>
    <ligand>
        <name>FMN</name>
        <dbReference type="ChEBI" id="CHEBI:58210"/>
    </ligand>
</feature>
<feature type="binding site" evidence="1">
    <location>
        <begin position="183"/>
        <end position="185"/>
    </location>
    <ligand>
        <name>substrate</name>
    </ligand>
</feature>
<feature type="binding site" evidence="1">
    <location>
        <position position="187"/>
    </location>
    <ligand>
        <name>FMN</name>
        <dbReference type="ChEBI" id="CHEBI:58210"/>
    </ligand>
</feature>